<accession>B1JCG9</accession>
<name>SYA_PSEPW</name>
<protein>
    <recommendedName>
        <fullName evidence="1">Alanine--tRNA ligase</fullName>
        <ecNumber evidence="1">6.1.1.7</ecNumber>
    </recommendedName>
    <alternativeName>
        <fullName evidence="1">Alanyl-tRNA synthetase</fullName>
        <shortName evidence="1">AlaRS</shortName>
    </alternativeName>
</protein>
<keyword id="KW-0030">Aminoacyl-tRNA synthetase</keyword>
<keyword id="KW-0067">ATP-binding</keyword>
<keyword id="KW-0963">Cytoplasm</keyword>
<keyword id="KW-0436">Ligase</keyword>
<keyword id="KW-0479">Metal-binding</keyword>
<keyword id="KW-0547">Nucleotide-binding</keyword>
<keyword id="KW-0648">Protein biosynthesis</keyword>
<keyword id="KW-0694">RNA-binding</keyword>
<keyword id="KW-0820">tRNA-binding</keyword>
<keyword id="KW-0862">Zinc</keyword>
<organism>
    <name type="scientific">Pseudomonas putida (strain W619)</name>
    <dbReference type="NCBI Taxonomy" id="390235"/>
    <lineage>
        <taxon>Bacteria</taxon>
        <taxon>Pseudomonadati</taxon>
        <taxon>Pseudomonadota</taxon>
        <taxon>Gammaproteobacteria</taxon>
        <taxon>Pseudomonadales</taxon>
        <taxon>Pseudomonadaceae</taxon>
        <taxon>Pseudomonas</taxon>
    </lineage>
</organism>
<feature type="chain" id="PRO_0000347742" description="Alanine--tRNA ligase">
    <location>
        <begin position="1"/>
        <end position="874"/>
    </location>
</feature>
<feature type="binding site" evidence="1">
    <location>
        <position position="562"/>
    </location>
    <ligand>
        <name>Zn(2+)</name>
        <dbReference type="ChEBI" id="CHEBI:29105"/>
    </ligand>
</feature>
<feature type="binding site" evidence="1">
    <location>
        <position position="566"/>
    </location>
    <ligand>
        <name>Zn(2+)</name>
        <dbReference type="ChEBI" id="CHEBI:29105"/>
    </ligand>
</feature>
<feature type="binding site" evidence="1">
    <location>
        <position position="665"/>
    </location>
    <ligand>
        <name>Zn(2+)</name>
        <dbReference type="ChEBI" id="CHEBI:29105"/>
    </ligand>
</feature>
<feature type="binding site" evidence="1">
    <location>
        <position position="669"/>
    </location>
    <ligand>
        <name>Zn(2+)</name>
        <dbReference type="ChEBI" id="CHEBI:29105"/>
    </ligand>
</feature>
<reference key="1">
    <citation type="submission" date="2008-02" db="EMBL/GenBank/DDBJ databases">
        <title>Complete sequence of Pseudomonas putida W619.</title>
        <authorList>
            <person name="Copeland A."/>
            <person name="Lucas S."/>
            <person name="Lapidus A."/>
            <person name="Barry K."/>
            <person name="Detter J.C."/>
            <person name="Glavina del Rio T."/>
            <person name="Dalin E."/>
            <person name="Tice H."/>
            <person name="Pitluck S."/>
            <person name="Chain P."/>
            <person name="Malfatti S."/>
            <person name="Shin M."/>
            <person name="Vergez L."/>
            <person name="Schmutz J."/>
            <person name="Larimer F."/>
            <person name="Land M."/>
            <person name="Hauser L."/>
            <person name="Kyrpides N."/>
            <person name="Kim E."/>
            <person name="Taghavi S."/>
            <person name="Vangronsveld D."/>
            <person name="van der Lelie D."/>
            <person name="Richardson P."/>
        </authorList>
    </citation>
    <scope>NUCLEOTIDE SEQUENCE [LARGE SCALE GENOMIC DNA]</scope>
    <source>
        <strain>W619</strain>
    </source>
</reference>
<dbReference type="EC" id="6.1.1.7" evidence="1"/>
<dbReference type="EMBL" id="CP000949">
    <property type="protein sequence ID" value="ACA74245.1"/>
    <property type="status" value="ALT_INIT"/>
    <property type="molecule type" value="Genomic_DNA"/>
</dbReference>
<dbReference type="SMR" id="B1JCG9"/>
<dbReference type="STRING" id="390235.PputW619_3763"/>
<dbReference type="KEGG" id="ppw:PputW619_3763"/>
<dbReference type="eggNOG" id="COG0013">
    <property type="taxonomic scope" value="Bacteria"/>
</dbReference>
<dbReference type="HOGENOM" id="CLU_004485_1_1_6"/>
<dbReference type="OrthoDB" id="9803884at2"/>
<dbReference type="GO" id="GO:0005829">
    <property type="term" value="C:cytosol"/>
    <property type="evidence" value="ECO:0007669"/>
    <property type="project" value="TreeGrafter"/>
</dbReference>
<dbReference type="GO" id="GO:0004813">
    <property type="term" value="F:alanine-tRNA ligase activity"/>
    <property type="evidence" value="ECO:0007669"/>
    <property type="project" value="UniProtKB-UniRule"/>
</dbReference>
<dbReference type="GO" id="GO:0002161">
    <property type="term" value="F:aminoacyl-tRNA deacylase activity"/>
    <property type="evidence" value="ECO:0007669"/>
    <property type="project" value="TreeGrafter"/>
</dbReference>
<dbReference type="GO" id="GO:0005524">
    <property type="term" value="F:ATP binding"/>
    <property type="evidence" value="ECO:0007669"/>
    <property type="project" value="UniProtKB-UniRule"/>
</dbReference>
<dbReference type="GO" id="GO:0000049">
    <property type="term" value="F:tRNA binding"/>
    <property type="evidence" value="ECO:0007669"/>
    <property type="project" value="UniProtKB-KW"/>
</dbReference>
<dbReference type="GO" id="GO:0008270">
    <property type="term" value="F:zinc ion binding"/>
    <property type="evidence" value="ECO:0007669"/>
    <property type="project" value="UniProtKB-UniRule"/>
</dbReference>
<dbReference type="GO" id="GO:0006419">
    <property type="term" value="P:alanyl-tRNA aminoacylation"/>
    <property type="evidence" value="ECO:0007669"/>
    <property type="project" value="UniProtKB-UniRule"/>
</dbReference>
<dbReference type="GO" id="GO:0045892">
    <property type="term" value="P:negative regulation of DNA-templated transcription"/>
    <property type="evidence" value="ECO:0007669"/>
    <property type="project" value="TreeGrafter"/>
</dbReference>
<dbReference type="CDD" id="cd00673">
    <property type="entry name" value="AlaRS_core"/>
    <property type="match status" value="1"/>
</dbReference>
<dbReference type="FunFam" id="2.40.30.130:FF:000001">
    <property type="entry name" value="Alanine--tRNA ligase"/>
    <property type="match status" value="1"/>
</dbReference>
<dbReference type="FunFam" id="3.10.310.40:FF:000001">
    <property type="entry name" value="Alanine--tRNA ligase"/>
    <property type="match status" value="1"/>
</dbReference>
<dbReference type="FunFam" id="3.30.54.20:FF:000001">
    <property type="entry name" value="Alanine--tRNA ligase"/>
    <property type="match status" value="1"/>
</dbReference>
<dbReference type="FunFam" id="3.30.930.10:FF:000004">
    <property type="entry name" value="Alanine--tRNA ligase"/>
    <property type="match status" value="1"/>
</dbReference>
<dbReference type="FunFam" id="3.30.980.10:FF:000004">
    <property type="entry name" value="Alanine--tRNA ligase, cytoplasmic"/>
    <property type="match status" value="1"/>
</dbReference>
<dbReference type="Gene3D" id="2.40.30.130">
    <property type="match status" value="1"/>
</dbReference>
<dbReference type="Gene3D" id="3.10.310.40">
    <property type="match status" value="1"/>
</dbReference>
<dbReference type="Gene3D" id="3.30.54.20">
    <property type="match status" value="1"/>
</dbReference>
<dbReference type="Gene3D" id="6.10.250.550">
    <property type="match status" value="1"/>
</dbReference>
<dbReference type="Gene3D" id="3.30.930.10">
    <property type="entry name" value="Bira Bifunctional Protein, Domain 2"/>
    <property type="match status" value="1"/>
</dbReference>
<dbReference type="Gene3D" id="3.30.980.10">
    <property type="entry name" value="Threonyl-trna Synthetase, Chain A, domain 2"/>
    <property type="match status" value="1"/>
</dbReference>
<dbReference type="HAMAP" id="MF_00036_B">
    <property type="entry name" value="Ala_tRNA_synth_B"/>
    <property type="match status" value="1"/>
</dbReference>
<dbReference type="InterPro" id="IPR045864">
    <property type="entry name" value="aa-tRNA-synth_II/BPL/LPL"/>
</dbReference>
<dbReference type="InterPro" id="IPR002318">
    <property type="entry name" value="Ala-tRNA-lgiase_IIc"/>
</dbReference>
<dbReference type="InterPro" id="IPR018162">
    <property type="entry name" value="Ala-tRNA-ligase_IIc_anticod-bd"/>
</dbReference>
<dbReference type="InterPro" id="IPR018165">
    <property type="entry name" value="Ala-tRNA-synth_IIc_core"/>
</dbReference>
<dbReference type="InterPro" id="IPR018164">
    <property type="entry name" value="Ala-tRNA-synth_IIc_N"/>
</dbReference>
<dbReference type="InterPro" id="IPR050058">
    <property type="entry name" value="Ala-tRNA_ligase"/>
</dbReference>
<dbReference type="InterPro" id="IPR023033">
    <property type="entry name" value="Ala_tRNA_ligase_euk/bac"/>
</dbReference>
<dbReference type="InterPro" id="IPR003156">
    <property type="entry name" value="DHHA1_dom"/>
</dbReference>
<dbReference type="InterPro" id="IPR018163">
    <property type="entry name" value="Thr/Ala-tRNA-synth_IIc_edit"/>
</dbReference>
<dbReference type="InterPro" id="IPR009000">
    <property type="entry name" value="Transl_B-barrel_sf"/>
</dbReference>
<dbReference type="InterPro" id="IPR012947">
    <property type="entry name" value="tRNA_SAD"/>
</dbReference>
<dbReference type="NCBIfam" id="TIGR00344">
    <property type="entry name" value="alaS"/>
    <property type="match status" value="1"/>
</dbReference>
<dbReference type="PANTHER" id="PTHR11777:SF9">
    <property type="entry name" value="ALANINE--TRNA LIGASE, CYTOPLASMIC"/>
    <property type="match status" value="1"/>
</dbReference>
<dbReference type="PANTHER" id="PTHR11777">
    <property type="entry name" value="ALANYL-TRNA SYNTHETASE"/>
    <property type="match status" value="1"/>
</dbReference>
<dbReference type="Pfam" id="PF02272">
    <property type="entry name" value="DHHA1"/>
    <property type="match status" value="1"/>
</dbReference>
<dbReference type="Pfam" id="PF01411">
    <property type="entry name" value="tRNA-synt_2c"/>
    <property type="match status" value="1"/>
</dbReference>
<dbReference type="Pfam" id="PF07973">
    <property type="entry name" value="tRNA_SAD"/>
    <property type="match status" value="1"/>
</dbReference>
<dbReference type="PRINTS" id="PR00980">
    <property type="entry name" value="TRNASYNTHALA"/>
</dbReference>
<dbReference type="SMART" id="SM00863">
    <property type="entry name" value="tRNA_SAD"/>
    <property type="match status" value="1"/>
</dbReference>
<dbReference type="SUPFAM" id="SSF55681">
    <property type="entry name" value="Class II aaRS and biotin synthetases"/>
    <property type="match status" value="1"/>
</dbReference>
<dbReference type="SUPFAM" id="SSF101353">
    <property type="entry name" value="Putative anticodon-binding domain of alanyl-tRNA synthetase (AlaRS)"/>
    <property type="match status" value="1"/>
</dbReference>
<dbReference type="SUPFAM" id="SSF55186">
    <property type="entry name" value="ThrRS/AlaRS common domain"/>
    <property type="match status" value="1"/>
</dbReference>
<dbReference type="SUPFAM" id="SSF50447">
    <property type="entry name" value="Translation proteins"/>
    <property type="match status" value="1"/>
</dbReference>
<dbReference type="PROSITE" id="PS50860">
    <property type="entry name" value="AA_TRNA_LIGASE_II_ALA"/>
    <property type="match status" value="1"/>
</dbReference>
<sequence>MKSAEIREAFLRFFEEQGHTRVASSSLIPNNDPTLLFTNAGMNQFKDCFLGAEKRAYTRAVSSQKCVRAGGKHNDLENVGYTARHHTFFEMLGNFSFGDYFKRDAITFAWTFLTSDKWLNLPKEKLWVTVYASDDEAYDIWTKEVGVPAERMVRIGDNKGAPYASDNFWTMGDTGPCGPCTEIFYDHGADIWGGPPGSPEEDGDRYIEIWNNVFMQFNRTADGVLHPLPAPSVDTGMGLERISAVMQHVHSNYEIDLFQNLLSAAAKAIGCSNDGQASLKVVADHIRSCGFLIADGVLPSNEGRGYVLRRIIRRACRHGNKLGAKGSFFYQIVAALAAEMGEAFPELKSQQAHIERVLKAEEEQFAKTLEQGLRILEQDLAQLKGDVVPGDVVFKLYDTYGFPMDLTADIARERELTIDEAGFEREMDAQRERARSASAFGMDYNSLVKVDTATDFVGYNATEGQGKVIALYKDGQSVDQLGEGEQGVVVLDRTPFYAESGGQVGDTGYLQSGAVRFDVQDTTKTGGAFLHHGVVASGALVIGSPVEAKVDADVQHATSLNHSATHLLHEALRQVLGEHVQQKGSLVDSQRLRFDFSHFEAVTPAQIKALEDIVNREVRKNTPVETEITDIETAKRKGAMALFGEKYGDTVRVLSMGGDFSVELCGGIHAKRTGDISLFKIISEGGVASGVRRIEAVTGAAALAYLNAAEEQVKEAAQLIKGNRDNLIDKLSAVLERNRQLEKQLEQLQAKAASAAGDDLSSAAVEVKGAKVLAARLDGQDGKALLALVDQLKNKLGHAVILLGSEHEGKVVLVAGVTKDLSSQLKAGDLMKQAAAAVGGKGGGRPDMAQGGGVDVAALDQALALAVPFAEQGL</sequence>
<gene>
    <name evidence="1" type="primary">alaS</name>
    <name type="ordered locus">PputW619_3763</name>
</gene>
<evidence type="ECO:0000255" key="1">
    <source>
        <dbReference type="HAMAP-Rule" id="MF_00036"/>
    </source>
</evidence>
<evidence type="ECO:0000305" key="2"/>
<proteinExistence type="inferred from homology"/>
<comment type="function">
    <text evidence="1">Catalyzes the attachment of alanine to tRNA(Ala) in a two-step reaction: alanine is first activated by ATP to form Ala-AMP and then transferred to the acceptor end of tRNA(Ala). Also edits incorrectly charged Ser-tRNA(Ala) and Gly-tRNA(Ala) via its editing domain.</text>
</comment>
<comment type="catalytic activity">
    <reaction evidence="1">
        <text>tRNA(Ala) + L-alanine + ATP = L-alanyl-tRNA(Ala) + AMP + diphosphate</text>
        <dbReference type="Rhea" id="RHEA:12540"/>
        <dbReference type="Rhea" id="RHEA-COMP:9657"/>
        <dbReference type="Rhea" id="RHEA-COMP:9923"/>
        <dbReference type="ChEBI" id="CHEBI:30616"/>
        <dbReference type="ChEBI" id="CHEBI:33019"/>
        <dbReference type="ChEBI" id="CHEBI:57972"/>
        <dbReference type="ChEBI" id="CHEBI:78442"/>
        <dbReference type="ChEBI" id="CHEBI:78497"/>
        <dbReference type="ChEBI" id="CHEBI:456215"/>
        <dbReference type="EC" id="6.1.1.7"/>
    </reaction>
</comment>
<comment type="cofactor">
    <cofactor evidence="1">
        <name>Zn(2+)</name>
        <dbReference type="ChEBI" id="CHEBI:29105"/>
    </cofactor>
    <text evidence="1">Binds 1 zinc ion per subunit.</text>
</comment>
<comment type="subcellular location">
    <subcellularLocation>
        <location evidence="1">Cytoplasm</location>
    </subcellularLocation>
</comment>
<comment type="domain">
    <text evidence="1">Consists of three domains; the N-terminal catalytic domain, the editing domain and the C-terminal C-Ala domain. The editing domain removes incorrectly charged amino acids, while the C-Ala domain, along with tRNA(Ala), serves as a bridge to cooperatively bring together the editing and aminoacylation centers thus stimulating deacylation of misacylated tRNAs.</text>
</comment>
<comment type="similarity">
    <text evidence="1">Belongs to the class-II aminoacyl-tRNA synthetase family.</text>
</comment>
<comment type="sequence caution" evidence="2">
    <conflict type="erroneous initiation">
        <sequence resource="EMBL-CDS" id="ACA74245"/>
    </conflict>
</comment>